<evidence type="ECO:0000255" key="1"/>
<evidence type="ECO:0000269" key="2">
    <source>
    </source>
</evidence>
<evidence type="ECO:0000305" key="3"/>
<evidence type="ECO:0007744" key="4">
    <source>
        <dbReference type="PDB" id="1IA5"/>
    </source>
</evidence>
<evidence type="ECO:0007744" key="5">
    <source>
        <dbReference type="PDB" id="1IB4"/>
    </source>
</evidence>
<evidence type="ECO:0007829" key="6">
    <source>
        <dbReference type="PDB" id="1IA5"/>
    </source>
</evidence>
<accession>O74213</accession>
<sequence>MHLNTTLLVSLALGAASVLASPAPPAITAPPTAEEIAKRATTCTFSGSNGASSASKSKTSCSTIVLSNVAVPSGTTLDLTKLNDGTHVIFSGETTFGYKEWSGPLISVSGSDLTITGASGHSINGDGSRWWDGEGGNGGKTKPKFFAAHSLTNSVISGLKIVNSPVQVFSVAGSDYLTLKDITIDNSDGDDNGGHNTDAFDIGTSTYVTISGATVYNQDDCVAVNSGENIYFSGGYCSGGHGLSIGSVGGRSDNTVKNVTFVDSTIINSDNGVRIKTNIDTTGSVSDVTYKDITLTSIAKYGIVVQQNYGDTSSTPTTGVPITDFVLDNVHGSVVSSGTNILISCGSGSCSDWTWTDVSVSGGKTSSKCTNVPSGASC</sequence>
<name>PGLR1_ASPAC</name>
<organism>
    <name type="scientific">Aspergillus aculeatus</name>
    <dbReference type="NCBI Taxonomy" id="5053"/>
    <lineage>
        <taxon>Eukaryota</taxon>
        <taxon>Fungi</taxon>
        <taxon>Dikarya</taxon>
        <taxon>Ascomycota</taxon>
        <taxon>Pezizomycotina</taxon>
        <taxon>Eurotiomycetes</taxon>
        <taxon>Eurotiomycetidae</taxon>
        <taxon>Eurotiales</taxon>
        <taxon>Aspergillaceae</taxon>
        <taxon>Aspergillus</taxon>
        <taxon>Aspergillus subgen. Circumdati</taxon>
    </lineage>
</organism>
<comment type="function">
    <text>Involved in maceration and soft-rotting of plant tissue. Hydrolyzes the 1,4-alpha glycosidic bonds of de-esterified pectate in the smooth region of the plant cell wall.</text>
</comment>
<comment type="catalytic activity">
    <reaction>
        <text>(1,4-alpha-D-galacturonosyl)n+m + H2O = (1,4-alpha-D-galacturonosyl)n + (1,4-alpha-D-galacturonosyl)m.</text>
        <dbReference type="EC" id="3.2.1.15"/>
    </reaction>
</comment>
<comment type="subcellular location">
    <subcellularLocation>
        <location evidence="3">Secreted</location>
    </subcellularLocation>
</comment>
<comment type="similarity">
    <text evidence="3">Belongs to the glycosyl hydrolase 28 family.</text>
</comment>
<gene>
    <name type="primary">pgaI</name>
    <name type="synonym">pg1</name>
    <name type="synonym">pga1</name>
</gene>
<keyword id="KW-0002">3D-structure</keyword>
<keyword id="KW-0961">Cell wall biogenesis/degradation</keyword>
<keyword id="KW-0165">Cleavage on pair of basic residues</keyword>
<keyword id="KW-1015">Disulfide bond</keyword>
<keyword id="KW-0325">Glycoprotein</keyword>
<keyword id="KW-0326">Glycosidase</keyword>
<keyword id="KW-0378">Hydrolase</keyword>
<keyword id="KW-0677">Repeat</keyword>
<keyword id="KW-0964">Secreted</keyword>
<keyword id="KW-0732">Signal</keyword>
<keyword id="KW-0865">Zymogen</keyword>
<proteinExistence type="evidence at protein level"/>
<reference key="1">
    <citation type="submission" date="1998-03" db="EMBL/GenBank/DDBJ databases">
        <title>Molecular and biochemical characterization of three functionally different polygalacturonases from the filamentous fungus Aspergillus aculeatus.</title>
        <authorList>
            <person name="Kauppinen S."/>
            <person name="Andersen L.N."/>
            <person name="Christgau S."/>
            <person name="Dalboege H."/>
            <person name="Kofod L.V."/>
        </authorList>
    </citation>
    <scope>NUCLEOTIDE SEQUENCE [MRNA]</scope>
    <source>
        <strain>KSM 510</strain>
    </source>
</reference>
<reference key="2">
    <citation type="submission" date="2003-08" db="EMBL/GenBank/DDBJ databases">
        <title>Molecular and biochemical characterization of three polygalacturonases from the filamentous fungus Aspergillus aculeatus.</title>
        <authorList>
            <person name="Schnorr K.M."/>
            <person name="Kauppinen S."/>
        </authorList>
    </citation>
    <scope>NUCLEOTIDE SEQUENCE [MRNA]</scope>
</reference>
<reference key="3">
    <citation type="journal article" date="2001" name="J. Mol. Biol.">
        <title>The X-ray structure of Aspergillus aculeatus polygalacturonase and a modeled structure of the polygalacturonase-octagalacturonate complex.</title>
        <authorList>
            <person name="Cho S.W."/>
            <person name="Lee S."/>
            <person name="Shin W."/>
        </authorList>
    </citation>
    <scope>X-RAY CRYSTALLOGRAPHY (2.0 ANGSTROMS) OF 40-378</scope>
    <scope>GLYCOSYLATION AT THR-44; SER-46; SER-48; SER-52; SER-53; SER-55; SER-57; SER-62; THR-63; SER-73 AND ASN-258</scope>
    <scope>DISULFIDE BONDS</scope>
    <scope>ACTIVE SITE</scope>
</reference>
<dbReference type="EC" id="3.2.1.15"/>
<dbReference type="EMBL" id="AF054893">
    <property type="protein sequence ID" value="AAC23565.1"/>
    <property type="molecule type" value="mRNA"/>
</dbReference>
<dbReference type="EMBL" id="AJ581480">
    <property type="protein sequence ID" value="CAE46193.1"/>
    <property type="molecule type" value="mRNA"/>
</dbReference>
<dbReference type="PDB" id="1IA5">
    <property type="method" value="X-ray"/>
    <property type="resolution" value="2.00 A"/>
    <property type="chains" value="A=40-378"/>
</dbReference>
<dbReference type="PDB" id="1IB4">
    <property type="method" value="X-ray"/>
    <property type="resolution" value="2.00 A"/>
    <property type="chains" value="A/B=40-378"/>
</dbReference>
<dbReference type="PDBsum" id="1IA5"/>
<dbReference type="PDBsum" id="1IB4"/>
<dbReference type="SMR" id="O74213"/>
<dbReference type="CAZy" id="GH28">
    <property type="family name" value="Glycoside Hydrolase Family 28"/>
</dbReference>
<dbReference type="GlyCosmos" id="O74213">
    <property type="glycosylation" value="11 sites, No reported glycans"/>
</dbReference>
<dbReference type="iPTMnet" id="O74213"/>
<dbReference type="VEuPathDB" id="FungiDB:ASPACDRAFT_53360"/>
<dbReference type="EvolutionaryTrace" id="O74213"/>
<dbReference type="GO" id="GO:0005576">
    <property type="term" value="C:extracellular region"/>
    <property type="evidence" value="ECO:0007669"/>
    <property type="project" value="UniProtKB-SubCell"/>
</dbReference>
<dbReference type="GO" id="GO:0004650">
    <property type="term" value="F:polygalacturonase activity"/>
    <property type="evidence" value="ECO:0007669"/>
    <property type="project" value="UniProtKB-EC"/>
</dbReference>
<dbReference type="GO" id="GO:0071555">
    <property type="term" value="P:cell wall organization"/>
    <property type="evidence" value="ECO:0007669"/>
    <property type="project" value="UniProtKB-KW"/>
</dbReference>
<dbReference type="GO" id="GO:0045490">
    <property type="term" value="P:pectin catabolic process"/>
    <property type="evidence" value="ECO:0007669"/>
    <property type="project" value="UniProtKB-ARBA"/>
</dbReference>
<dbReference type="FunFam" id="2.160.20.10:FF:000002">
    <property type="entry name" value="Endopolygalacturonase D"/>
    <property type="match status" value="1"/>
</dbReference>
<dbReference type="Gene3D" id="2.160.20.10">
    <property type="entry name" value="Single-stranded right-handed beta-helix, Pectin lyase-like"/>
    <property type="match status" value="1"/>
</dbReference>
<dbReference type="InterPro" id="IPR000743">
    <property type="entry name" value="Glyco_hydro_28"/>
</dbReference>
<dbReference type="InterPro" id="IPR050434">
    <property type="entry name" value="Glycosyl_hydrlase_28"/>
</dbReference>
<dbReference type="InterPro" id="IPR006626">
    <property type="entry name" value="PbH1"/>
</dbReference>
<dbReference type="InterPro" id="IPR012334">
    <property type="entry name" value="Pectin_lyas_fold"/>
</dbReference>
<dbReference type="InterPro" id="IPR011050">
    <property type="entry name" value="Pectin_lyase_fold/virulence"/>
</dbReference>
<dbReference type="PANTHER" id="PTHR31884">
    <property type="entry name" value="POLYGALACTURONASE"/>
    <property type="match status" value="1"/>
</dbReference>
<dbReference type="PANTHER" id="PTHR31884:SF1">
    <property type="entry name" value="POLYGALACTURONASE"/>
    <property type="match status" value="1"/>
</dbReference>
<dbReference type="Pfam" id="PF00295">
    <property type="entry name" value="Glyco_hydro_28"/>
    <property type="match status" value="1"/>
</dbReference>
<dbReference type="SMART" id="SM00710">
    <property type="entry name" value="PbH1"/>
    <property type="match status" value="5"/>
</dbReference>
<dbReference type="SUPFAM" id="SSF51126">
    <property type="entry name" value="Pectin lyase-like"/>
    <property type="match status" value="1"/>
</dbReference>
<dbReference type="PROSITE" id="PS00502">
    <property type="entry name" value="POLYGALACTURONASE"/>
    <property type="match status" value="1"/>
</dbReference>
<protein>
    <recommendedName>
        <fullName>Endopolygalacturonase I</fullName>
        <ecNumber>3.2.1.15</ecNumber>
    </recommendedName>
    <alternativeName>
        <fullName>Pectinase 1</fullName>
    </alternativeName>
    <alternativeName>
        <fullName>Polygalacturonase I</fullName>
        <shortName>PG-I</shortName>
    </alternativeName>
</protein>
<feature type="signal peptide" evidence="1">
    <location>
        <begin position="1"/>
        <end position="20"/>
    </location>
</feature>
<feature type="propeptide" id="PRO_0000024762" evidence="1">
    <location>
        <begin position="21"/>
        <end position="39"/>
    </location>
</feature>
<feature type="chain" id="PRO_0000024763" description="Endopolygalacturonase I">
    <location>
        <begin position="40"/>
        <end position="378"/>
    </location>
</feature>
<feature type="repeat" description="PbH1 1" evidence="1">
    <location>
        <begin position="174"/>
        <end position="204"/>
    </location>
</feature>
<feature type="repeat" description="PbH1 2" evidence="1">
    <location>
        <begin position="205"/>
        <end position="226"/>
    </location>
</feature>
<feature type="repeat" description="PbH1 3" evidence="1">
    <location>
        <begin position="227"/>
        <end position="247"/>
    </location>
</feature>
<feature type="repeat" description="PbH1 4" evidence="1">
    <location>
        <begin position="256"/>
        <end position="277"/>
    </location>
</feature>
<feature type="repeat" description="PbH1 5" evidence="1">
    <location>
        <begin position="285"/>
        <end position="307"/>
    </location>
</feature>
<feature type="active site" description="Proton donor" evidence="2">
    <location>
        <position position="219"/>
    </location>
</feature>
<feature type="active site" evidence="2">
    <location>
        <position position="241"/>
    </location>
</feature>
<feature type="glycosylation site" description="O-linked (Man...) threonine" evidence="2 4 5">
    <location>
        <position position="44"/>
    </location>
</feature>
<feature type="glycosylation site" description="O-linked (Man...) serine" evidence="2 4 5">
    <location>
        <position position="46"/>
    </location>
</feature>
<feature type="glycosylation site" description="O-linked (Man...) serine" evidence="2 4 5">
    <location>
        <position position="48"/>
    </location>
</feature>
<feature type="glycosylation site" description="O-linked (Man...) serine" evidence="2 4 5">
    <location>
        <position position="52"/>
    </location>
</feature>
<feature type="glycosylation site" description="O-linked (Man...) serine" evidence="2 4 5">
    <location>
        <position position="53"/>
    </location>
</feature>
<feature type="glycosylation site" description="O-linked (Man...) serine" evidence="2 4 5">
    <location>
        <position position="55"/>
    </location>
</feature>
<feature type="glycosylation site" description="O-linked (Man...) serine" evidence="2 4 5">
    <location>
        <position position="57"/>
    </location>
</feature>
<feature type="glycosylation site" description="O-linked (Man...) serine" evidence="2 4 5">
    <location>
        <position position="62"/>
    </location>
</feature>
<feature type="glycosylation site" description="O-linked (Man...) threonine" evidence="2 4 5">
    <location>
        <position position="63"/>
    </location>
</feature>
<feature type="glycosylation site" description="O-linked (Man...) serine" evidence="2 4 5">
    <location>
        <position position="73"/>
    </location>
</feature>
<feature type="glycosylation site" description="N-linked (GlcNAc...) asparagine" evidence="2 4 5">
    <location>
        <position position="258"/>
    </location>
</feature>
<feature type="disulfide bond" evidence="2 4 5">
    <location>
        <begin position="43"/>
        <end position="61"/>
    </location>
</feature>
<feature type="disulfide bond" evidence="2 4 5">
    <location>
        <begin position="221"/>
        <end position="237"/>
    </location>
</feature>
<feature type="disulfide bond" evidence="2 4 5">
    <location>
        <begin position="345"/>
        <end position="350"/>
    </location>
</feature>
<feature type="disulfide bond" evidence="2 4 5">
    <location>
        <begin position="369"/>
        <end position="378"/>
    </location>
</feature>
<feature type="strand" evidence="6">
    <location>
        <begin position="42"/>
        <end position="46"/>
    </location>
</feature>
<feature type="helix" evidence="6">
    <location>
        <begin position="47"/>
        <end position="49"/>
    </location>
</feature>
<feature type="helix" evidence="6">
    <location>
        <begin position="50"/>
        <end position="57"/>
    </location>
</feature>
<feature type="helix" evidence="6">
    <location>
        <begin position="58"/>
        <end position="60"/>
    </location>
</feature>
<feature type="strand" evidence="6">
    <location>
        <begin position="62"/>
        <end position="68"/>
    </location>
</feature>
<feature type="strand" evidence="6">
    <location>
        <begin position="77"/>
        <end position="79"/>
    </location>
</feature>
<feature type="strand" evidence="6">
    <location>
        <begin position="87"/>
        <end position="96"/>
    </location>
</feature>
<feature type="strand" evidence="6">
    <location>
        <begin position="105"/>
        <end position="112"/>
    </location>
</feature>
<feature type="strand" evidence="6">
    <location>
        <begin position="114"/>
        <end position="117"/>
    </location>
</feature>
<feature type="strand" evidence="6">
    <location>
        <begin position="122"/>
        <end position="124"/>
    </location>
</feature>
<feature type="helix" evidence="6">
    <location>
        <begin position="127"/>
        <end position="129"/>
    </location>
</feature>
<feature type="turn" evidence="6">
    <location>
        <begin position="135"/>
        <end position="137"/>
    </location>
</feature>
<feature type="strand" evidence="6">
    <location>
        <begin position="138"/>
        <end position="140"/>
    </location>
</feature>
<feature type="strand" evidence="6">
    <location>
        <begin position="146"/>
        <end position="158"/>
    </location>
</feature>
<feature type="strand" evidence="6">
    <location>
        <begin position="160"/>
        <end position="162"/>
    </location>
</feature>
<feature type="strand" evidence="6">
    <location>
        <begin position="169"/>
        <end position="173"/>
    </location>
</feature>
<feature type="strand" evidence="6">
    <location>
        <begin position="175"/>
        <end position="181"/>
    </location>
</feature>
<feature type="strand" evidence="6">
    <location>
        <begin position="183"/>
        <end position="185"/>
    </location>
</feature>
<feature type="helix" evidence="6">
    <location>
        <begin position="187"/>
        <end position="189"/>
    </location>
</feature>
<feature type="turn" evidence="6">
    <location>
        <begin position="190"/>
        <end position="193"/>
    </location>
</feature>
<feature type="strand" evidence="6">
    <location>
        <begin position="199"/>
        <end position="204"/>
    </location>
</feature>
<feature type="strand" evidence="6">
    <location>
        <begin position="206"/>
        <end position="212"/>
    </location>
</feature>
<feature type="strand" evidence="6">
    <location>
        <begin position="214"/>
        <end position="216"/>
    </location>
</feature>
<feature type="strand" evidence="6">
    <location>
        <begin position="221"/>
        <end position="234"/>
    </location>
</feature>
<feature type="strand" evidence="6">
    <location>
        <begin position="236"/>
        <end position="241"/>
    </location>
</feature>
<feature type="strand" evidence="6">
    <location>
        <begin position="243"/>
        <end position="248"/>
    </location>
</feature>
<feature type="strand" evidence="6">
    <location>
        <begin position="250"/>
        <end position="252"/>
    </location>
</feature>
<feature type="strand" evidence="6">
    <location>
        <begin position="255"/>
        <end position="268"/>
    </location>
</feature>
<feature type="strand" evidence="6">
    <location>
        <begin position="270"/>
        <end position="278"/>
    </location>
</feature>
<feature type="strand" evidence="6">
    <location>
        <begin position="284"/>
        <end position="309"/>
    </location>
</feature>
<feature type="strand" evidence="6">
    <location>
        <begin position="318"/>
        <end position="320"/>
    </location>
</feature>
<feature type="strand" evidence="6">
    <location>
        <begin position="322"/>
        <end position="334"/>
    </location>
</feature>
<feature type="strand" evidence="6">
    <location>
        <begin position="338"/>
        <end position="344"/>
    </location>
</feature>
<feature type="strand" evidence="6">
    <location>
        <begin position="350"/>
        <end position="364"/>
    </location>
</feature>